<proteinExistence type="inferred from homology"/>
<accession>Q83IC8</accession>
<name>DXR_TROW8</name>
<keyword id="KW-0414">Isoprene biosynthesis</keyword>
<keyword id="KW-0464">Manganese</keyword>
<keyword id="KW-0479">Metal-binding</keyword>
<keyword id="KW-0521">NADP</keyword>
<keyword id="KW-0560">Oxidoreductase</keyword>
<evidence type="ECO:0000255" key="1">
    <source>
        <dbReference type="HAMAP-Rule" id="MF_00183"/>
    </source>
</evidence>
<sequence>MQRVIIVGSTGSIGTQAIDFILKNRDSFLVVGLAASTQTSLLREQAQVFGTKNTAQGASEAAELIEATEADVVLNAITGAAGLLSTYATLKTGKRLALANKESLIMGGKYFLDMTSFKGQITPVDSEHSAIAQAMKSGKFSEVNKLILTASGGPFYDRESLEGITLKDALDHPTWNMGPMISINSATMFNKGLEIIEAHLLFGIPYSQIDVVIHPQSIVHSMVEYKDGSVIAQASVADMTLPIGYALSWPNRALNAVRPLEWGARQRWDFLPPTENSMRSINLARRAGEAGGVYPAVLNASNECAVEAFMAGKISFARIIHVTETVFNLYTKQHTNRESAKNPIEVILEEDARTRELAKTVIENMSAD</sequence>
<organism>
    <name type="scientific">Tropheryma whipplei (strain TW08/27)</name>
    <name type="common">Whipple's bacillus</name>
    <dbReference type="NCBI Taxonomy" id="218496"/>
    <lineage>
        <taxon>Bacteria</taxon>
        <taxon>Bacillati</taxon>
        <taxon>Actinomycetota</taxon>
        <taxon>Actinomycetes</taxon>
        <taxon>Micrococcales</taxon>
        <taxon>Tropherymataceae</taxon>
        <taxon>Tropheryma</taxon>
    </lineage>
</organism>
<protein>
    <recommendedName>
        <fullName evidence="1">1-deoxy-D-xylulose 5-phosphate reductoisomerase</fullName>
        <shortName evidence="1">DXP reductoisomerase</shortName>
        <ecNumber evidence="1">1.1.1.267</ecNumber>
    </recommendedName>
    <alternativeName>
        <fullName evidence="1">1-deoxyxylulose-5-phosphate reductoisomerase</fullName>
    </alternativeName>
    <alternativeName>
        <fullName evidence="1">2-C-methyl-D-erythritol 4-phosphate synthase</fullName>
    </alternativeName>
</protein>
<reference key="1">
    <citation type="journal article" date="2003" name="Lancet">
        <title>Sequencing and analysis of the genome of the Whipple's disease bacterium Tropheryma whipplei.</title>
        <authorList>
            <person name="Bentley S.D."/>
            <person name="Maiwald M."/>
            <person name="Murphy L.D."/>
            <person name="Pallen M.J."/>
            <person name="Yeats C.A."/>
            <person name="Dover L.G."/>
            <person name="Norbertczak H.T."/>
            <person name="Besra G.S."/>
            <person name="Quail M.A."/>
            <person name="Harris D.E."/>
            <person name="von Herbay A."/>
            <person name="Goble A."/>
            <person name="Rutter S."/>
            <person name="Squares R."/>
            <person name="Squares S."/>
            <person name="Barrell B.G."/>
            <person name="Parkhill J."/>
            <person name="Relman D.A."/>
        </authorList>
    </citation>
    <scope>NUCLEOTIDE SEQUENCE [LARGE SCALE GENOMIC DNA]</scope>
    <source>
        <strain>TW08/27</strain>
    </source>
</reference>
<dbReference type="EC" id="1.1.1.267" evidence="1"/>
<dbReference type="EMBL" id="BX251410">
    <property type="protein sequence ID" value="CAD66783.1"/>
    <property type="molecule type" value="Genomic_DNA"/>
</dbReference>
<dbReference type="RefSeq" id="WP_011096064.1">
    <property type="nucleotide sequence ID" value="NC_004551.1"/>
</dbReference>
<dbReference type="SMR" id="Q83IC8"/>
<dbReference type="GeneID" id="67387872"/>
<dbReference type="KEGG" id="tws:TW099"/>
<dbReference type="HOGENOM" id="CLU_035714_4_0_11"/>
<dbReference type="UniPathway" id="UPA00056">
    <property type="reaction ID" value="UER00092"/>
</dbReference>
<dbReference type="GO" id="GO:0030604">
    <property type="term" value="F:1-deoxy-D-xylulose-5-phosphate reductoisomerase activity"/>
    <property type="evidence" value="ECO:0007669"/>
    <property type="project" value="UniProtKB-UniRule"/>
</dbReference>
<dbReference type="GO" id="GO:0030145">
    <property type="term" value="F:manganese ion binding"/>
    <property type="evidence" value="ECO:0007669"/>
    <property type="project" value="TreeGrafter"/>
</dbReference>
<dbReference type="GO" id="GO:0070402">
    <property type="term" value="F:NADPH binding"/>
    <property type="evidence" value="ECO:0007669"/>
    <property type="project" value="InterPro"/>
</dbReference>
<dbReference type="GO" id="GO:0051484">
    <property type="term" value="P:isopentenyl diphosphate biosynthetic process, methylerythritol 4-phosphate pathway involved in terpenoid biosynthetic process"/>
    <property type="evidence" value="ECO:0007669"/>
    <property type="project" value="TreeGrafter"/>
</dbReference>
<dbReference type="Gene3D" id="1.10.1740.10">
    <property type="match status" value="1"/>
</dbReference>
<dbReference type="Gene3D" id="3.40.50.720">
    <property type="entry name" value="NAD(P)-binding Rossmann-like Domain"/>
    <property type="match status" value="2"/>
</dbReference>
<dbReference type="HAMAP" id="MF_00183">
    <property type="entry name" value="DXP_reductoisom"/>
    <property type="match status" value="1"/>
</dbReference>
<dbReference type="InterPro" id="IPR003821">
    <property type="entry name" value="DXP_reductoisomerase"/>
</dbReference>
<dbReference type="InterPro" id="IPR013644">
    <property type="entry name" value="DXP_reductoisomerase_C"/>
</dbReference>
<dbReference type="InterPro" id="IPR013512">
    <property type="entry name" value="DXP_reductoisomerase_N"/>
</dbReference>
<dbReference type="InterPro" id="IPR026877">
    <property type="entry name" value="DXPR_C"/>
</dbReference>
<dbReference type="InterPro" id="IPR036169">
    <property type="entry name" value="DXPR_C_sf"/>
</dbReference>
<dbReference type="InterPro" id="IPR036291">
    <property type="entry name" value="NAD(P)-bd_dom_sf"/>
</dbReference>
<dbReference type="NCBIfam" id="TIGR00243">
    <property type="entry name" value="Dxr"/>
    <property type="match status" value="1"/>
</dbReference>
<dbReference type="PANTHER" id="PTHR30525">
    <property type="entry name" value="1-DEOXY-D-XYLULOSE 5-PHOSPHATE REDUCTOISOMERASE"/>
    <property type="match status" value="1"/>
</dbReference>
<dbReference type="PANTHER" id="PTHR30525:SF0">
    <property type="entry name" value="1-DEOXY-D-XYLULOSE 5-PHOSPHATE REDUCTOISOMERASE, CHLOROPLASTIC"/>
    <property type="match status" value="1"/>
</dbReference>
<dbReference type="Pfam" id="PF08436">
    <property type="entry name" value="DXP_redisom_C"/>
    <property type="match status" value="1"/>
</dbReference>
<dbReference type="Pfam" id="PF02670">
    <property type="entry name" value="DXP_reductoisom"/>
    <property type="match status" value="2"/>
</dbReference>
<dbReference type="Pfam" id="PF13288">
    <property type="entry name" value="DXPR_C"/>
    <property type="match status" value="1"/>
</dbReference>
<dbReference type="PIRSF" id="PIRSF006205">
    <property type="entry name" value="Dxp_reductismrs"/>
    <property type="match status" value="1"/>
</dbReference>
<dbReference type="SUPFAM" id="SSF69055">
    <property type="entry name" value="1-deoxy-D-xylulose-5-phosphate reductoisomerase, C-terminal domain"/>
    <property type="match status" value="1"/>
</dbReference>
<dbReference type="SUPFAM" id="SSF55347">
    <property type="entry name" value="Glyceraldehyde-3-phosphate dehydrogenase-like, C-terminal domain"/>
    <property type="match status" value="1"/>
</dbReference>
<dbReference type="SUPFAM" id="SSF51735">
    <property type="entry name" value="NAD(P)-binding Rossmann-fold domains"/>
    <property type="match status" value="1"/>
</dbReference>
<feature type="chain" id="PRO_0000163728" description="1-deoxy-D-xylulose 5-phosphate reductoisomerase">
    <location>
        <begin position="1"/>
        <end position="368"/>
    </location>
</feature>
<feature type="binding site" evidence="1">
    <location>
        <position position="10"/>
    </location>
    <ligand>
        <name>NADPH</name>
        <dbReference type="ChEBI" id="CHEBI:57783"/>
    </ligand>
</feature>
<feature type="binding site" evidence="1">
    <location>
        <position position="11"/>
    </location>
    <ligand>
        <name>NADPH</name>
        <dbReference type="ChEBI" id="CHEBI:57783"/>
    </ligand>
</feature>
<feature type="binding site" evidence="1">
    <location>
        <position position="12"/>
    </location>
    <ligand>
        <name>NADPH</name>
        <dbReference type="ChEBI" id="CHEBI:57783"/>
    </ligand>
</feature>
<feature type="binding site" evidence="1">
    <location>
        <position position="13"/>
    </location>
    <ligand>
        <name>NADPH</name>
        <dbReference type="ChEBI" id="CHEBI:57783"/>
    </ligand>
</feature>
<feature type="binding site" evidence="1">
    <location>
        <position position="38"/>
    </location>
    <ligand>
        <name>NADPH</name>
        <dbReference type="ChEBI" id="CHEBI:57783"/>
    </ligand>
</feature>
<feature type="binding site" evidence="1">
    <location>
        <position position="100"/>
    </location>
    <ligand>
        <name>NADPH</name>
        <dbReference type="ChEBI" id="CHEBI:57783"/>
    </ligand>
</feature>
<feature type="binding site" evidence="1">
    <location>
        <position position="101"/>
    </location>
    <ligand>
        <name>1-deoxy-D-xylulose 5-phosphate</name>
        <dbReference type="ChEBI" id="CHEBI:57792"/>
    </ligand>
</feature>
<feature type="binding site" evidence="1">
    <location>
        <position position="102"/>
    </location>
    <ligand>
        <name>NADPH</name>
        <dbReference type="ChEBI" id="CHEBI:57783"/>
    </ligand>
</feature>
<feature type="binding site" evidence="1">
    <location>
        <position position="125"/>
    </location>
    <ligand>
        <name>Mn(2+)</name>
        <dbReference type="ChEBI" id="CHEBI:29035"/>
    </ligand>
</feature>
<feature type="binding site" evidence="1">
    <location>
        <position position="126"/>
    </location>
    <ligand>
        <name>1-deoxy-D-xylulose 5-phosphate</name>
        <dbReference type="ChEBI" id="CHEBI:57792"/>
    </ligand>
</feature>
<feature type="binding site" evidence="1">
    <location>
        <position position="127"/>
    </location>
    <ligand>
        <name>1-deoxy-D-xylulose 5-phosphate</name>
        <dbReference type="ChEBI" id="CHEBI:57792"/>
    </ligand>
</feature>
<feature type="binding site" evidence="1">
    <location>
        <position position="127"/>
    </location>
    <ligand>
        <name>Mn(2+)</name>
        <dbReference type="ChEBI" id="CHEBI:29035"/>
    </ligand>
</feature>
<feature type="binding site" evidence="1">
    <location>
        <position position="151"/>
    </location>
    <ligand>
        <name>1-deoxy-D-xylulose 5-phosphate</name>
        <dbReference type="ChEBI" id="CHEBI:57792"/>
    </ligand>
</feature>
<feature type="binding site" evidence="1">
    <location>
        <position position="172"/>
    </location>
    <ligand>
        <name>1-deoxy-D-xylulose 5-phosphate</name>
        <dbReference type="ChEBI" id="CHEBI:57792"/>
    </ligand>
</feature>
<feature type="binding site" evidence="1">
    <location>
        <position position="178"/>
    </location>
    <ligand>
        <name>NADPH</name>
        <dbReference type="ChEBI" id="CHEBI:57783"/>
    </ligand>
</feature>
<feature type="binding site" evidence="1">
    <location>
        <position position="185"/>
    </location>
    <ligand>
        <name>1-deoxy-D-xylulose 5-phosphate</name>
        <dbReference type="ChEBI" id="CHEBI:57792"/>
    </ligand>
</feature>
<feature type="binding site" evidence="1">
    <location>
        <position position="190"/>
    </location>
    <ligand>
        <name>1-deoxy-D-xylulose 5-phosphate</name>
        <dbReference type="ChEBI" id="CHEBI:57792"/>
    </ligand>
</feature>
<feature type="binding site" evidence="1">
    <location>
        <position position="191"/>
    </location>
    <ligand>
        <name>1-deoxy-D-xylulose 5-phosphate</name>
        <dbReference type="ChEBI" id="CHEBI:57792"/>
    </ligand>
</feature>
<feature type="binding site" evidence="1">
    <location>
        <position position="194"/>
    </location>
    <ligand>
        <name>1-deoxy-D-xylulose 5-phosphate</name>
        <dbReference type="ChEBI" id="CHEBI:57792"/>
    </ligand>
</feature>
<feature type="binding site" evidence="1">
    <location>
        <position position="194"/>
    </location>
    <ligand>
        <name>Mn(2+)</name>
        <dbReference type="ChEBI" id="CHEBI:29035"/>
    </ligand>
</feature>
<comment type="function">
    <text evidence="1">Catalyzes the NADPH-dependent rearrangement and reduction of 1-deoxy-D-xylulose-5-phosphate (DXP) to 2-C-methyl-D-erythritol 4-phosphate (MEP).</text>
</comment>
<comment type="catalytic activity">
    <reaction evidence="1">
        <text>2-C-methyl-D-erythritol 4-phosphate + NADP(+) = 1-deoxy-D-xylulose 5-phosphate + NADPH + H(+)</text>
        <dbReference type="Rhea" id="RHEA:13717"/>
        <dbReference type="ChEBI" id="CHEBI:15378"/>
        <dbReference type="ChEBI" id="CHEBI:57783"/>
        <dbReference type="ChEBI" id="CHEBI:57792"/>
        <dbReference type="ChEBI" id="CHEBI:58262"/>
        <dbReference type="ChEBI" id="CHEBI:58349"/>
        <dbReference type="EC" id="1.1.1.267"/>
    </reaction>
    <physiologicalReaction direction="right-to-left" evidence="1">
        <dbReference type="Rhea" id="RHEA:13719"/>
    </physiologicalReaction>
</comment>
<comment type="cofactor">
    <cofactor evidence="1">
        <name>Mg(2+)</name>
        <dbReference type="ChEBI" id="CHEBI:18420"/>
    </cofactor>
    <cofactor evidence="1">
        <name>Mn(2+)</name>
        <dbReference type="ChEBI" id="CHEBI:29035"/>
    </cofactor>
</comment>
<comment type="pathway">
    <text evidence="1">Isoprenoid biosynthesis; isopentenyl diphosphate biosynthesis via DXP pathway; isopentenyl diphosphate from 1-deoxy-D-xylulose 5-phosphate: step 1/6.</text>
</comment>
<comment type="similarity">
    <text evidence="1">Belongs to the DXR family.</text>
</comment>
<gene>
    <name evidence="1" type="primary">dxr</name>
    <name type="ordered locus">TW099</name>
</gene>